<proteinExistence type="inferred from homology"/>
<gene>
    <name evidence="1" type="primary">GTF1</name>
    <name type="ordered locus">AAR093C</name>
</gene>
<accession>Q75EI6</accession>
<dbReference type="EC" id="6.3.5.-" evidence="1"/>
<dbReference type="EMBL" id="AE016814">
    <property type="protein sequence ID" value="AAS50458.1"/>
    <property type="molecule type" value="Genomic_DNA"/>
</dbReference>
<dbReference type="RefSeq" id="NP_982634.1">
    <property type="nucleotide sequence ID" value="NM_207987.1"/>
</dbReference>
<dbReference type="SMR" id="Q75EI6"/>
<dbReference type="FunCoup" id="Q75EI6">
    <property type="interactions" value="85"/>
</dbReference>
<dbReference type="STRING" id="284811.Q75EI6"/>
<dbReference type="EnsemblFungi" id="AAS50458">
    <property type="protein sequence ID" value="AAS50458"/>
    <property type="gene ID" value="AGOS_AAR093C"/>
</dbReference>
<dbReference type="GeneID" id="4618424"/>
<dbReference type="KEGG" id="ago:AGOS_AAR093C"/>
<dbReference type="eggNOG" id="ENOG502S3RS">
    <property type="taxonomic scope" value="Eukaryota"/>
</dbReference>
<dbReference type="HOGENOM" id="CLU_120617_0_0_1"/>
<dbReference type="InParanoid" id="Q75EI6"/>
<dbReference type="OMA" id="WRLCRTH"/>
<dbReference type="OrthoDB" id="4053592at2759"/>
<dbReference type="Proteomes" id="UP000000591">
    <property type="component" value="Chromosome I"/>
</dbReference>
<dbReference type="GO" id="GO:0030956">
    <property type="term" value="C:glutamyl-tRNA(Gln) amidotransferase complex"/>
    <property type="evidence" value="ECO:0007669"/>
    <property type="project" value="UniProtKB-UniRule"/>
</dbReference>
<dbReference type="GO" id="GO:0005743">
    <property type="term" value="C:mitochondrial inner membrane"/>
    <property type="evidence" value="ECO:0007669"/>
    <property type="project" value="UniProtKB-SubCell"/>
</dbReference>
<dbReference type="GO" id="GO:0005524">
    <property type="term" value="F:ATP binding"/>
    <property type="evidence" value="ECO:0007669"/>
    <property type="project" value="UniProtKB-KW"/>
</dbReference>
<dbReference type="GO" id="GO:0050567">
    <property type="term" value="F:glutaminyl-tRNA synthase (glutamine-hydrolyzing) activity"/>
    <property type="evidence" value="ECO:0007669"/>
    <property type="project" value="UniProtKB-UniRule"/>
</dbReference>
<dbReference type="GO" id="GO:0070681">
    <property type="term" value="P:glutaminyl-tRNAGln biosynthesis via transamidation"/>
    <property type="evidence" value="ECO:0007669"/>
    <property type="project" value="UniProtKB-UniRule"/>
</dbReference>
<dbReference type="GO" id="GO:0032543">
    <property type="term" value="P:mitochondrial translation"/>
    <property type="evidence" value="ECO:0007669"/>
    <property type="project" value="UniProtKB-UniRule"/>
</dbReference>
<dbReference type="CDD" id="cd21422">
    <property type="entry name" value="GatF"/>
    <property type="match status" value="1"/>
</dbReference>
<dbReference type="HAMAP" id="MF_03151">
    <property type="entry name" value="GatF"/>
    <property type="match status" value="1"/>
</dbReference>
<dbReference type="InterPro" id="IPR027499">
    <property type="entry name" value="GatF"/>
</dbReference>
<dbReference type="Pfam" id="PF20977">
    <property type="entry name" value="GatF"/>
    <property type="match status" value="1"/>
</dbReference>
<comment type="function">
    <text evidence="1">Allows the formation of correctly charged Gln-tRNA(Gln) through the transamidation of misacylated Glu-tRNA(Gln) in the mitochondria. The reaction takes place in the presence of glutamine and ATP through an activated gamma-phospho-Glu-tRNA(Gln). Required for proper protein synthesis within the mitochondrion.</text>
</comment>
<comment type="catalytic activity">
    <reaction evidence="1">
        <text>L-glutamyl-tRNA(Gln) + L-glutamine + ATP + H2O = L-glutaminyl-tRNA(Gln) + L-glutamate + ADP + phosphate + H(+)</text>
        <dbReference type="Rhea" id="RHEA:17521"/>
        <dbReference type="Rhea" id="RHEA-COMP:9681"/>
        <dbReference type="Rhea" id="RHEA-COMP:9684"/>
        <dbReference type="ChEBI" id="CHEBI:15377"/>
        <dbReference type="ChEBI" id="CHEBI:15378"/>
        <dbReference type="ChEBI" id="CHEBI:29985"/>
        <dbReference type="ChEBI" id="CHEBI:30616"/>
        <dbReference type="ChEBI" id="CHEBI:43474"/>
        <dbReference type="ChEBI" id="CHEBI:58359"/>
        <dbReference type="ChEBI" id="CHEBI:78520"/>
        <dbReference type="ChEBI" id="CHEBI:78521"/>
        <dbReference type="ChEBI" id="CHEBI:456216"/>
    </reaction>
</comment>
<comment type="subunit">
    <text evidence="1">Subunit of the heterotrimeric GatFAB amidotransferase (AdT) complex, composed of A, B and F subunits.</text>
</comment>
<comment type="subcellular location">
    <subcellularLocation>
        <location evidence="1">Mitochondrion inner membrane</location>
        <topology evidence="1">Peripheral membrane protein</topology>
        <orientation evidence="1">Matrix side</orientation>
    </subcellularLocation>
</comment>
<comment type="miscellaneous">
    <text evidence="1">This protein may be expected to contain an N-terminal transit peptide but none has been predicted.</text>
</comment>
<comment type="similarity">
    <text evidence="1">Belongs to the GatF family.</text>
</comment>
<name>GATF_EREGS</name>
<sequence length="190" mass="21486">MPLARLVEGEKHDECTYVAASSLLIGRHKMLRSLIYASRRWSSSVGARFSSREELQAYLARPAWQPEDYLPSAEDIARQQLSEEETRKLLKLSGLPEADIQEVRRRLATQLSFVSQLQSVEVDDCADPQYAKAMQRHPAAIGYEELVRRAELDAKDTSLGEKSGSWDSTATATLKKDGYFVLREGLLQKR</sequence>
<feature type="chain" id="PRO_0000413394" description="Glutamyl-tRNA(Gln) amidotransferase subunit F, mitochondrial">
    <location>
        <begin position="1"/>
        <end position="190"/>
    </location>
</feature>
<protein>
    <recommendedName>
        <fullName evidence="1">Glutamyl-tRNA(Gln) amidotransferase subunit F, mitochondrial</fullName>
        <shortName evidence="1">Glu-AdT subunit F</shortName>
        <ecNumber evidence="1">6.3.5.-</ecNumber>
    </recommendedName>
</protein>
<organism>
    <name type="scientific">Eremothecium gossypii (strain ATCC 10895 / CBS 109.51 / FGSC 9923 / NRRL Y-1056)</name>
    <name type="common">Yeast</name>
    <name type="synonym">Ashbya gossypii</name>
    <dbReference type="NCBI Taxonomy" id="284811"/>
    <lineage>
        <taxon>Eukaryota</taxon>
        <taxon>Fungi</taxon>
        <taxon>Dikarya</taxon>
        <taxon>Ascomycota</taxon>
        <taxon>Saccharomycotina</taxon>
        <taxon>Saccharomycetes</taxon>
        <taxon>Saccharomycetales</taxon>
        <taxon>Saccharomycetaceae</taxon>
        <taxon>Eremothecium</taxon>
    </lineage>
</organism>
<evidence type="ECO:0000255" key="1">
    <source>
        <dbReference type="HAMAP-Rule" id="MF_03151"/>
    </source>
</evidence>
<reference key="1">
    <citation type="journal article" date="2004" name="Science">
        <title>The Ashbya gossypii genome as a tool for mapping the ancient Saccharomyces cerevisiae genome.</title>
        <authorList>
            <person name="Dietrich F.S."/>
            <person name="Voegeli S."/>
            <person name="Brachat S."/>
            <person name="Lerch A."/>
            <person name="Gates K."/>
            <person name="Steiner S."/>
            <person name="Mohr C."/>
            <person name="Poehlmann R."/>
            <person name="Luedi P."/>
            <person name="Choi S."/>
            <person name="Wing R.A."/>
            <person name="Flavier A."/>
            <person name="Gaffney T.D."/>
            <person name="Philippsen P."/>
        </authorList>
    </citation>
    <scope>NUCLEOTIDE SEQUENCE [LARGE SCALE GENOMIC DNA]</scope>
    <source>
        <strain>ATCC 10895 / CBS 109.51 / FGSC 9923 / NRRL Y-1056</strain>
    </source>
</reference>
<reference key="2">
    <citation type="journal article" date="2013" name="G3 (Bethesda)">
        <title>Genomes of Ashbya fungi isolated from insects reveal four mating-type loci, numerous translocations, lack of transposons, and distinct gene duplications.</title>
        <authorList>
            <person name="Dietrich F.S."/>
            <person name="Voegeli S."/>
            <person name="Kuo S."/>
            <person name="Philippsen P."/>
        </authorList>
    </citation>
    <scope>GENOME REANNOTATION</scope>
    <source>
        <strain>ATCC 10895 / CBS 109.51 / FGSC 9923 / NRRL Y-1056</strain>
    </source>
</reference>
<keyword id="KW-0067">ATP-binding</keyword>
<keyword id="KW-0436">Ligase</keyword>
<keyword id="KW-0472">Membrane</keyword>
<keyword id="KW-0496">Mitochondrion</keyword>
<keyword id="KW-0999">Mitochondrion inner membrane</keyword>
<keyword id="KW-0547">Nucleotide-binding</keyword>
<keyword id="KW-0648">Protein biosynthesis</keyword>
<keyword id="KW-1185">Reference proteome</keyword>